<protein>
    <recommendedName>
        <fullName evidence="1">Protoheme IX farnesyltransferase</fullName>
        <ecNumber evidence="1">2.5.1.141</ecNumber>
    </recommendedName>
    <alternativeName>
        <fullName evidence="1">Heme B farnesyltransferase</fullName>
    </alternativeName>
    <alternativeName>
        <fullName evidence="1">Heme O synthase</fullName>
    </alternativeName>
</protein>
<organism>
    <name type="scientific">Azoarcus sp. (strain BH72)</name>
    <dbReference type="NCBI Taxonomy" id="418699"/>
    <lineage>
        <taxon>Bacteria</taxon>
        <taxon>Pseudomonadati</taxon>
        <taxon>Pseudomonadota</taxon>
        <taxon>Betaproteobacteria</taxon>
        <taxon>Rhodocyclales</taxon>
        <taxon>Zoogloeaceae</taxon>
        <taxon>Azoarcus</taxon>
    </lineage>
</organism>
<dbReference type="EC" id="2.5.1.141" evidence="1"/>
<dbReference type="EMBL" id="AM406670">
    <property type="protein sequence ID" value="CAL95910.1"/>
    <property type="molecule type" value="Genomic_DNA"/>
</dbReference>
<dbReference type="RefSeq" id="WP_011767017.1">
    <property type="nucleotide sequence ID" value="NC_008702.1"/>
</dbReference>
<dbReference type="SMR" id="A1KAQ4"/>
<dbReference type="STRING" id="62928.azo3294"/>
<dbReference type="KEGG" id="azo:azo3294"/>
<dbReference type="eggNOG" id="COG0109">
    <property type="taxonomic scope" value="Bacteria"/>
</dbReference>
<dbReference type="HOGENOM" id="CLU_029631_0_2_4"/>
<dbReference type="UniPathway" id="UPA00834">
    <property type="reaction ID" value="UER00712"/>
</dbReference>
<dbReference type="Proteomes" id="UP000002588">
    <property type="component" value="Chromosome"/>
</dbReference>
<dbReference type="GO" id="GO:0005886">
    <property type="term" value="C:plasma membrane"/>
    <property type="evidence" value="ECO:0007669"/>
    <property type="project" value="UniProtKB-SubCell"/>
</dbReference>
<dbReference type="GO" id="GO:0008495">
    <property type="term" value="F:protoheme IX farnesyltransferase activity"/>
    <property type="evidence" value="ECO:0007669"/>
    <property type="project" value="UniProtKB-UniRule"/>
</dbReference>
<dbReference type="GO" id="GO:0048034">
    <property type="term" value="P:heme O biosynthetic process"/>
    <property type="evidence" value="ECO:0007669"/>
    <property type="project" value="UniProtKB-UniRule"/>
</dbReference>
<dbReference type="CDD" id="cd13957">
    <property type="entry name" value="PT_UbiA_Cox10"/>
    <property type="match status" value="1"/>
</dbReference>
<dbReference type="Gene3D" id="1.10.357.140">
    <property type="entry name" value="UbiA prenyltransferase"/>
    <property type="match status" value="1"/>
</dbReference>
<dbReference type="HAMAP" id="MF_00154">
    <property type="entry name" value="CyoE_CtaB"/>
    <property type="match status" value="1"/>
</dbReference>
<dbReference type="InterPro" id="IPR006369">
    <property type="entry name" value="Protohaem_IX_farnesylTrfase"/>
</dbReference>
<dbReference type="InterPro" id="IPR000537">
    <property type="entry name" value="UbiA_prenyltransferase"/>
</dbReference>
<dbReference type="InterPro" id="IPR030470">
    <property type="entry name" value="UbiA_prenylTrfase_CS"/>
</dbReference>
<dbReference type="InterPro" id="IPR044878">
    <property type="entry name" value="UbiA_sf"/>
</dbReference>
<dbReference type="NCBIfam" id="TIGR01473">
    <property type="entry name" value="cyoE_ctaB"/>
    <property type="match status" value="1"/>
</dbReference>
<dbReference type="NCBIfam" id="NF003349">
    <property type="entry name" value="PRK04375.1-2"/>
    <property type="match status" value="1"/>
</dbReference>
<dbReference type="PANTHER" id="PTHR43448:SF7">
    <property type="entry name" value="4-HYDROXYBENZOATE SOLANESYLTRANSFERASE"/>
    <property type="match status" value="1"/>
</dbReference>
<dbReference type="PANTHER" id="PTHR43448">
    <property type="entry name" value="PROTOHEME IX FARNESYLTRANSFERASE, MITOCHONDRIAL"/>
    <property type="match status" value="1"/>
</dbReference>
<dbReference type="Pfam" id="PF01040">
    <property type="entry name" value="UbiA"/>
    <property type="match status" value="1"/>
</dbReference>
<dbReference type="PROSITE" id="PS00943">
    <property type="entry name" value="UBIA"/>
    <property type="match status" value="1"/>
</dbReference>
<reference key="1">
    <citation type="journal article" date="2006" name="Nat. Biotechnol.">
        <title>Complete genome of the mutualistic, N2-fixing grass endophyte Azoarcus sp. strain BH72.</title>
        <authorList>
            <person name="Krause A."/>
            <person name="Ramakumar A."/>
            <person name="Bartels D."/>
            <person name="Battistoni F."/>
            <person name="Bekel T."/>
            <person name="Boch J."/>
            <person name="Boehm M."/>
            <person name="Friedrich F."/>
            <person name="Hurek T."/>
            <person name="Krause L."/>
            <person name="Linke B."/>
            <person name="McHardy A.C."/>
            <person name="Sarkar A."/>
            <person name="Schneiker S."/>
            <person name="Syed A.A."/>
            <person name="Thauer R."/>
            <person name="Vorhoelter F.-J."/>
            <person name="Weidner S."/>
            <person name="Puehler A."/>
            <person name="Reinhold-Hurek B."/>
            <person name="Kaiser O."/>
            <person name="Goesmann A."/>
        </authorList>
    </citation>
    <scope>NUCLEOTIDE SEQUENCE [LARGE SCALE GENOMIC DNA]</scope>
    <source>
        <strain>BH72</strain>
    </source>
</reference>
<proteinExistence type="inferred from homology"/>
<gene>
    <name evidence="1" type="primary">ctaB</name>
    <name type="synonym">coxD</name>
    <name type="ordered locus">azo3294</name>
</gene>
<keyword id="KW-0997">Cell inner membrane</keyword>
<keyword id="KW-1003">Cell membrane</keyword>
<keyword id="KW-0350">Heme biosynthesis</keyword>
<keyword id="KW-0472">Membrane</keyword>
<keyword id="KW-1185">Reference proteome</keyword>
<keyword id="KW-0808">Transferase</keyword>
<keyword id="KW-0812">Transmembrane</keyword>
<keyword id="KW-1133">Transmembrane helix</keyword>
<sequence>MKTLTLAHHGLGRRAHAFYVLTKPRVNALIVFCAVIGMFLAVPDGLPDPLRVFAATVGIACVAGAAAAMNCLIEQQLDARMARTRNRPLPRGELHSVEVLVFAGVLGGFGLSVLYQAVNALTMWLTLATFVGYAVIYTLLLKPRTPQNIVIGGASGAMPPVLGWAAVSGEVTAEALLLFLIIFAWTPPHFWSLALYRTADYARAGLPMLPVTHGAAYTRLSVLLYTCALFGVTLLPFAIRMSGWIYLVAAVTLGLRFVHYAWRLLRDYSDALARRTFRFSIVYLSLLFAALLADHYLRL</sequence>
<name>COXX_AZOSB</name>
<comment type="function">
    <text evidence="1">Converts heme B (protoheme IX) to heme O by substitution of the vinyl group on carbon 2 of heme B porphyrin ring with a hydroxyethyl farnesyl side group.</text>
</comment>
<comment type="catalytic activity">
    <reaction evidence="1">
        <text>heme b + (2E,6E)-farnesyl diphosphate + H2O = Fe(II)-heme o + diphosphate</text>
        <dbReference type="Rhea" id="RHEA:28070"/>
        <dbReference type="ChEBI" id="CHEBI:15377"/>
        <dbReference type="ChEBI" id="CHEBI:33019"/>
        <dbReference type="ChEBI" id="CHEBI:60344"/>
        <dbReference type="ChEBI" id="CHEBI:60530"/>
        <dbReference type="ChEBI" id="CHEBI:175763"/>
        <dbReference type="EC" id="2.5.1.141"/>
    </reaction>
</comment>
<comment type="pathway">
    <text evidence="1">Porphyrin-containing compound metabolism; heme O biosynthesis; heme O from protoheme: step 1/1.</text>
</comment>
<comment type="subcellular location">
    <subcellularLocation>
        <location evidence="1">Cell inner membrane</location>
        <topology evidence="1">Multi-pass membrane protein</topology>
    </subcellularLocation>
</comment>
<comment type="miscellaneous">
    <text evidence="1">Carbon 2 of the heme B porphyrin ring is defined according to the Fischer nomenclature.</text>
</comment>
<comment type="similarity">
    <text evidence="1">Belongs to the UbiA prenyltransferase family. Protoheme IX farnesyltransferase subfamily.</text>
</comment>
<feature type="chain" id="PRO_0000326997" description="Protoheme IX farnesyltransferase">
    <location>
        <begin position="1"/>
        <end position="299"/>
    </location>
</feature>
<feature type="transmembrane region" description="Helical" evidence="1">
    <location>
        <begin position="26"/>
        <end position="46"/>
    </location>
</feature>
<feature type="transmembrane region" description="Helical" evidence="1">
    <location>
        <begin position="53"/>
        <end position="73"/>
    </location>
</feature>
<feature type="transmembrane region" description="Helical" evidence="1">
    <location>
        <begin position="94"/>
        <end position="114"/>
    </location>
</feature>
<feature type="transmembrane region" description="Helical" evidence="1">
    <location>
        <begin position="121"/>
        <end position="141"/>
    </location>
</feature>
<feature type="transmembrane region" description="Helical" evidence="1">
    <location>
        <begin position="149"/>
        <end position="169"/>
    </location>
</feature>
<feature type="transmembrane region" description="Helical" evidence="1">
    <location>
        <begin position="175"/>
        <end position="195"/>
    </location>
</feature>
<feature type="transmembrane region" description="Helical" evidence="1">
    <location>
        <begin position="217"/>
        <end position="239"/>
    </location>
</feature>
<feature type="transmembrane region" description="Helical" evidence="1">
    <location>
        <begin position="243"/>
        <end position="265"/>
    </location>
</feature>
<feature type="transmembrane region" description="Helical" evidence="1">
    <location>
        <begin position="277"/>
        <end position="297"/>
    </location>
</feature>
<accession>A1KAQ4</accession>
<evidence type="ECO:0000255" key="1">
    <source>
        <dbReference type="HAMAP-Rule" id="MF_00154"/>
    </source>
</evidence>